<protein>
    <recommendedName>
        <fullName>Sensor histidine kinase/phosphatase LytS</fullName>
        <ecNumber evidence="2">2.7.13.3</ecNumber>
        <ecNumber evidence="2">3.1.3.-</ecNumber>
    </recommendedName>
    <alternativeName>
        <fullName>Autolysin sensor kinase</fullName>
    </alternativeName>
</protein>
<reference key="1">
    <citation type="journal article" date="2004" name="Proc. Natl. Acad. Sci. U.S.A.">
        <title>Complete genomes of two clinical Staphylococcus aureus strains: evidence for the rapid evolution of virulence and drug resistance.</title>
        <authorList>
            <person name="Holden M.T.G."/>
            <person name="Feil E.J."/>
            <person name="Lindsay J.A."/>
            <person name="Peacock S.J."/>
            <person name="Day N.P.J."/>
            <person name="Enright M.C."/>
            <person name="Foster T.J."/>
            <person name="Moore C.E."/>
            <person name="Hurst L."/>
            <person name="Atkin R."/>
            <person name="Barron A."/>
            <person name="Bason N."/>
            <person name="Bentley S.D."/>
            <person name="Chillingworth C."/>
            <person name="Chillingworth T."/>
            <person name="Churcher C."/>
            <person name="Clark L."/>
            <person name="Corton C."/>
            <person name="Cronin A."/>
            <person name="Doggett J."/>
            <person name="Dowd L."/>
            <person name="Feltwell T."/>
            <person name="Hance Z."/>
            <person name="Harris B."/>
            <person name="Hauser H."/>
            <person name="Holroyd S."/>
            <person name="Jagels K."/>
            <person name="James K.D."/>
            <person name="Lennard N."/>
            <person name="Line A."/>
            <person name="Mayes R."/>
            <person name="Moule S."/>
            <person name="Mungall K."/>
            <person name="Ormond D."/>
            <person name="Quail M.A."/>
            <person name="Rabbinowitsch E."/>
            <person name="Rutherford K.M."/>
            <person name="Sanders M."/>
            <person name="Sharp S."/>
            <person name="Simmonds M."/>
            <person name="Stevens K."/>
            <person name="Whitehead S."/>
            <person name="Barrell B.G."/>
            <person name="Spratt B.G."/>
            <person name="Parkhill J."/>
        </authorList>
    </citation>
    <scope>NUCLEOTIDE SEQUENCE [LARGE SCALE GENOMIC DNA]</scope>
    <source>
        <strain>MRSA252</strain>
    </source>
</reference>
<proteinExistence type="inferred from homology"/>
<accession>Q6GK52</accession>
<sequence length="584" mass="65028">MLSLTMLLLERVGLIIILAYVLMNIPYFKNLMNRRRTWKARWQLCIIFSLFALMSNLTGIVIDHQHSLSGSVYFRLDDDVSLANTRVLTIGVAGLVGGPFVGLFVGVISGIFRVYMGGADAQVYLISSIFIGIIAGYFGLQAQRRKRYPSIAKSAMIGIVMEMIQMLSILTFSHDKAYAVDLISLIALPMIIVNSVGTAIFMSIIISTLKQEEQMKAVQTHDVLQLMNQTLPYFKEGLNRESAQQIAMIIKNLMKVSAVAITSKNEILSHVGAGSDHHIPTNEILTSLSKDVLKSGKLKEVHTKEEIGCSHPNCPLRAAIVIPLEMHGSIVGTLKMYFTNPNDLTFVERQLAEGLANIFSSQIELGEAETQSKLLKDAEIKSLQAQVSPHFFFNSINTISALVRINSEKARELLLELSYFFRANLQGSKQHTITLDKELSQVRAYLSLEQARYPGRFNININVEDKYRNVLVPPFLIQILVENAIKHAFTNRKQGNDIDVSVIKETATHVRIIVQDNGQGISKDKMHLLGETSVESESGTGSALENLNLRLKGLFGKSAALQFESTSSGTTFWCVLPYERQEEE</sequence>
<gene>
    <name type="primary">lytS</name>
    <name type="ordered locus">SAR0257</name>
</gene>
<name>LYTS_STAAR</name>
<organism>
    <name type="scientific">Staphylococcus aureus (strain MRSA252)</name>
    <dbReference type="NCBI Taxonomy" id="282458"/>
    <lineage>
        <taxon>Bacteria</taxon>
        <taxon>Bacillati</taxon>
        <taxon>Bacillota</taxon>
        <taxon>Bacilli</taxon>
        <taxon>Bacillales</taxon>
        <taxon>Staphylococcaceae</taxon>
        <taxon>Staphylococcus</taxon>
    </lineage>
</organism>
<evidence type="ECO:0000250" key="1"/>
<evidence type="ECO:0000250" key="2">
    <source>
        <dbReference type="UniProtKB" id="Q53705"/>
    </source>
</evidence>
<evidence type="ECO:0000255" key="3"/>
<feature type="chain" id="PRO_0000074795" description="Sensor histidine kinase/phosphatase LytS">
    <location>
        <begin position="1"/>
        <end position="584"/>
    </location>
</feature>
<feature type="transmembrane region" description="Helical" evidence="3">
    <location>
        <begin position="6"/>
        <end position="28"/>
    </location>
</feature>
<feature type="transmembrane region" description="Helical" evidence="3">
    <location>
        <begin position="40"/>
        <end position="62"/>
    </location>
</feature>
<feature type="transmembrane region" description="Helical" evidence="3">
    <location>
        <begin position="88"/>
        <end position="110"/>
    </location>
</feature>
<feature type="transmembrane region" description="Helical" evidence="3">
    <location>
        <begin position="123"/>
        <end position="140"/>
    </location>
</feature>
<feature type="transmembrane region" description="Helical" evidence="3">
    <location>
        <begin position="155"/>
        <end position="172"/>
    </location>
</feature>
<feature type="transmembrane region" description="Helical" evidence="3">
    <location>
        <begin position="184"/>
        <end position="206"/>
    </location>
</feature>
<feature type="domain" description="GAF">
    <location>
        <begin position="311"/>
        <end position="362"/>
    </location>
</feature>
<feature type="domain" description="Histidine kinase">
    <location>
        <begin position="363"/>
        <end position="580"/>
    </location>
</feature>
<feature type="modified residue" description="Phosphohistidine; by autocatalysis" evidence="1">
    <location>
        <position position="390"/>
    </location>
</feature>
<keyword id="KW-0067">ATP-binding</keyword>
<keyword id="KW-1003">Cell membrane</keyword>
<keyword id="KW-0378">Hydrolase</keyword>
<keyword id="KW-0418">Kinase</keyword>
<keyword id="KW-0472">Membrane</keyword>
<keyword id="KW-0547">Nucleotide-binding</keyword>
<keyword id="KW-0597">Phosphoprotein</keyword>
<keyword id="KW-0808">Transferase</keyword>
<keyword id="KW-0812">Transmembrane</keyword>
<keyword id="KW-1133">Transmembrane helix</keyword>
<keyword id="KW-0902">Two-component regulatory system</keyword>
<dbReference type="EC" id="2.7.13.3" evidence="2"/>
<dbReference type="EC" id="3.1.3.-" evidence="2"/>
<dbReference type="EMBL" id="BX571856">
    <property type="protein sequence ID" value="CAG39283.1"/>
    <property type="molecule type" value="Genomic_DNA"/>
</dbReference>
<dbReference type="RefSeq" id="WP_000950282.1">
    <property type="nucleotide sequence ID" value="NC_002952.2"/>
</dbReference>
<dbReference type="SMR" id="Q6GK52"/>
<dbReference type="KEGG" id="sar:SAR0257"/>
<dbReference type="HOGENOM" id="CLU_020473_3_3_9"/>
<dbReference type="Proteomes" id="UP000000596">
    <property type="component" value="Chromosome"/>
</dbReference>
<dbReference type="GO" id="GO:0005886">
    <property type="term" value="C:plasma membrane"/>
    <property type="evidence" value="ECO:0007669"/>
    <property type="project" value="UniProtKB-SubCell"/>
</dbReference>
<dbReference type="GO" id="GO:0005524">
    <property type="term" value="F:ATP binding"/>
    <property type="evidence" value="ECO:0007669"/>
    <property type="project" value="UniProtKB-KW"/>
</dbReference>
<dbReference type="GO" id="GO:0016787">
    <property type="term" value="F:hydrolase activity"/>
    <property type="evidence" value="ECO:0007669"/>
    <property type="project" value="UniProtKB-KW"/>
</dbReference>
<dbReference type="GO" id="GO:0000155">
    <property type="term" value="F:phosphorelay sensor kinase activity"/>
    <property type="evidence" value="ECO:0007669"/>
    <property type="project" value="InterPro"/>
</dbReference>
<dbReference type="GO" id="GO:0071555">
    <property type="term" value="P:cell wall organization"/>
    <property type="evidence" value="ECO:0007669"/>
    <property type="project" value="InterPro"/>
</dbReference>
<dbReference type="CDD" id="cd16957">
    <property type="entry name" value="HATPase_LytS-like"/>
    <property type="match status" value="1"/>
</dbReference>
<dbReference type="Gene3D" id="1.10.1760.20">
    <property type="match status" value="1"/>
</dbReference>
<dbReference type="Gene3D" id="3.30.450.40">
    <property type="match status" value="1"/>
</dbReference>
<dbReference type="Gene3D" id="3.30.565.10">
    <property type="entry name" value="Histidine kinase-like ATPase, C-terminal domain"/>
    <property type="match status" value="1"/>
</dbReference>
<dbReference type="InterPro" id="IPR050640">
    <property type="entry name" value="Bact_2-comp_sensor_kinase"/>
</dbReference>
<dbReference type="InterPro" id="IPR003018">
    <property type="entry name" value="GAF"/>
</dbReference>
<dbReference type="InterPro" id="IPR029016">
    <property type="entry name" value="GAF-like_dom_sf"/>
</dbReference>
<dbReference type="InterPro" id="IPR036890">
    <property type="entry name" value="HATPase_C_sf"/>
</dbReference>
<dbReference type="InterPro" id="IPR010559">
    <property type="entry name" value="Sig_transdc_His_kin_internal"/>
</dbReference>
<dbReference type="InterPro" id="IPR011620">
    <property type="entry name" value="Sig_transdc_His_kinase_LytS_TM"/>
</dbReference>
<dbReference type="PANTHER" id="PTHR34220">
    <property type="entry name" value="SENSOR HISTIDINE KINASE YPDA"/>
    <property type="match status" value="1"/>
</dbReference>
<dbReference type="PANTHER" id="PTHR34220:SF7">
    <property type="entry name" value="SENSOR HISTIDINE KINASE YPDA"/>
    <property type="match status" value="1"/>
</dbReference>
<dbReference type="Pfam" id="PF07694">
    <property type="entry name" value="5TM-5TMR_LYT"/>
    <property type="match status" value="1"/>
</dbReference>
<dbReference type="Pfam" id="PF02518">
    <property type="entry name" value="HATPase_c"/>
    <property type="match status" value="1"/>
</dbReference>
<dbReference type="Pfam" id="PF06580">
    <property type="entry name" value="His_kinase"/>
    <property type="match status" value="1"/>
</dbReference>
<dbReference type="SMART" id="SM00065">
    <property type="entry name" value="GAF"/>
    <property type="match status" value="1"/>
</dbReference>
<dbReference type="SMART" id="SM00387">
    <property type="entry name" value="HATPase_c"/>
    <property type="match status" value="1"/>
</dbReference>
<dbReference type="SUPFAM" id="SSF55874">
    <property type="entry name" value="ATPase domain of HSP90 chaperone/DNA topoisomerase II/histidine kinase"/>
    <property type="match status" value="1"/>
</dbReference>
<dbReference type="SUPFAM" id="SSF55781">
    <property type="entry name" value="GAF domain-like"/>
    <property type="match status" value="1"/>
</dbReference>
<comment type="function">
    <text evidence="2">Member of the two-component regulatory system LytR/LytS that regulates genes involved in autolysis, programmed cell death, biofilm formation and cell wall metabolism. Also participates in sensing and responding to host defense cationic antimicrobial peptides (HDPs). Functions as a sensor protein kinase which is autophosphorylated at a histidine residue and transfers its phosphate group to the conserved aspartic acid residue in the regulatory domain of LytR. In turn, LytR binds to the upstream promoter regions of target genes including lrgA and lrgB, to positively regulate their expression. Also possesses a phosphatase activity that dephosphorylates and thus inactivates LytR.</text>
</comment>
<comment type="catalytic activity">
    <reaction evidence="2">
        <text>ATP + protein L-histidine = ADP + protein N-phospho-L-histidine.</text>
        <dbReference type="EC" id="2.7.13.3"/>
    </reaction>
</comment>
<comment type="subcellular location">
    <subcellularLocation>
        <location evidence="1">Cell membrane</location>
        <topology evidence="1">Multi-pass membrane protein</topology>
    </subcellularLocation>
</comment>
<comment type="PTM">
    <text evidence="2">Autophosphorylated on His-390.</text>
</comment>